<accession>P0A8N5</accession>
<accession>P14825</accession>
<accession>Q2M6H4</accession>
<reference key="1">
    <citation type="journal article" date="1990" name="Nucleic Acids Res.">
        <title>Homology of lysS and lysU, the two Escherichia coli genes encoding distinct lysyl-tRNA synthetase species.</title>
        <authorList>
            <person name="Leveque F."/>
            <person name="Plateau P."/>
            <person name="Dessen P."/>
            <person name="Blanquet S."/>
        </authorList>
    </citation>
    <scope>NUCLEOTIDE SEQUENCE [GENOMIC DNA]</scope>
    <scope>PROTEIN SEQUENCE OF 2-21</scope>
</reference>
<reference key="2">
    <citation type="submission" date="1993-09" db="EMBL/GenBank/DDBJ databases">
        <authorList>
            <person name="Dessen P."/>
        </authorList>
    </citation>
    <scope>SEQUENCE REVISION TO 446</scope>
</reference>
<reference key="3">
    <citation type="journal article" date="1990" name="J. Bacteriol.">
        <title>Roles of the two lysyl-tRNA synthetases of Escherichia coli: analysis of nucleotide sequences and mutant behavior.</title>
        <authorList>
            <person name="Clark R.L."/>
            <person name="Neidhardt F.C."/>
        </authorList>
    </citation>
    <scope>NUCLEOTIDE SEQUENCE [GENOMIC DNA]</scope>
</reference>
<reference key="4">
    <citation type="journal article" date="1995" name="Nucleic Acids Res.">
        <title>Analysis of the Escherichia coli genome VI: DNA sequence of the region from 92.8 through 100 minutes.</title>
        <authorList>
            <person name="Burland V.D."/>
            <person name="Plunkett G. III"/>
            <person name="Sofia H.J."/>
            <person name="Daniels D.L."/>
            <person name="Blattner F.R."/>
        </authorList>
    </citation>
    <scope>NUCLEOTIDE SEQUENCE [LARGE SCALE GENOMIC DNA]</scope>
    <source>
        <strain>K12 / MG1655 / ATCC 47076</strain>
    </source>
</reference>
<reference key="5">
    <citation type="journal article" date="1997" name="Science">
        <title>The complete genome sequence of Escherichia coli K-12.</title>
        <authorList>
            <person name="Blattner F.R."/>
            <person name="Plunkett G. III"/>
            <person name="Bloch C.A."/>
            <person name="Perna N.T."/>
            <person name="Burland V."/>
            <person name="Riley M."/>
            <person name="Collado-Vides J."/>
            <person name="Glasner J.D."/>
            <person name="Rode C.K."/>
            <person name="Mayhew G.F."/>
            <person name="Gregor J."/>
            <person name="Davis N.W."/>
            <person name="Kirkpatrick H.A."/>
            <person name="Goeden M.A."/>
            <person name="Rose D.J."/>
            <person name="Mau B."/>
            <person name="Shao Y."/>
        </authorList>
    </citation>
    <scope>NUCLEOTIDE SEQUENCE [LARGE SCALE GENOMIC DNA]</scope>
    <source>
        <strain>K12 / MG1655 / ATCC 47076</strain>
    </source>
</reference>
<reference key="6">
    <citation type="journal article" date="2006" name="Mol. Syst. Biol.">
        <title>Highly accurate genome sequences of Escherichia coli K-12 strains MG1655 and W3110.</title>
        <authorList>
            <person name="Hayashi K."/>
            <person name="Morooka N."/>
            <person name="Yamamoto Y."/>
            <person name="Fujita K."/>
            <person name="Isono K."/>
            <person name="Choi S."/>
            <person name="Ohtsubo E."/>
            <person name="Baba T."/>
            <person name="Wanner B.L."/>
            <person name="Mori H."/>
            <person name="Horiuchi T."/>
        </authorList>
    </citation>
    <scope>NUCLEOTIDE SEQUENCE [LARGE SCALE GENOMIC DNA]</scope>
    <source>
        <strain>K12 / W3110 / ATCC 27325 / DSM 5911</strain>
    </source>
</reference>
<reference key="7">
    <citation type="journal article" date="1997" name="Electrophoresis">
        <title>Escherichia coli proteome analysis using the gene-protein database.</title>
        <authorList>
            <person name="VanBogelen R.A."/>
            <person name="Abshire K.Z."/>
            <person name="Moldover B."/>
            <person name="Olson E.R."/>
            <person name="Neidhardt F.C."/>
        </authorList>
    </citation>
    <scope>IDENTIFICATION BY 2D-GEL</scope>
</reference>
<reference key="8">
    <citation type="journal article" date="2009" name="Mol. Cell. Proteomics">
        <title>Lysine acetylation is a highly abundant and evolutionarily conserved modification in Escherichia coli.</title>
        <authorList>
            <person name="Zhang J."/>
            <person name="Sprung R."/>
            <person name="Pei J."/>
            <person name="Tan X."/>
            <person name="Kim S."/>
            <person name="Zhu H."/>
            <person name="Liu C.F."/>
            <person name="Grishin N.V."/>
            <person name="Zhao Y."/>
        </authorList>
    </citation>
    <scope>ACETYLATION [LARGE SCALE ANALYSIS] AT LYS-114 AND LYS-156</scope>
    <scope>IDENTIFICATION BY MASS SPECTROMETRY</scope>
    <source>
        <strain>K12 / JW1106</strain>
        <strain>K12 / MG1655 / ATCC 47076</strain>
    </source>
</reference>
<reference key="9">
    <citation type="journal article" date="1995" name="Structure">
        <title>The crystal structure of the lysyl-tRNA synthetase (LysU) from Escherichia coli.</title>
        <authorList>
            <person name="Onesti S."/>
            <person name="Miller A.D."/>
            <person name="Brick P."/>
        </authorList>
    </citation>
    <scope>X-RAY CRYSTALLOGRAPHY (2.8 ANGSTROMS)</scope>
</reference>
<reference key="10">
    <citation type="journal article" date="2000" name="Biochemistry">
        <title>Active site of lysyl-tRNA synthetase: structural studies of the adenylation reaction.</title>
        <authorList>
            <person name="Desogus G."/>
            <person name="Todone F."/>
            <person name="Brick P."/>
            <person name="Onesti S."/>
        </authorList>
    </citation>
    <scope>X-RAY CRYSTALLOGRAPHY (2.12 ANGSTROMS)</scope>
</reference>
<organism>
    <name type="scientific">Escherichia coli (strain K12)</name>
    <dbReference type="NCBI Taxonomy" id="83333"/>
    <lineage>
        <taxon>Bacteria</taxon>
        <taxon>Pseudomonadati</taxon>
        <taxon>Pseudomonadota</taxon>
        <taxon>Gammaproteobacteria</taxon>
        <taxon>Enterobacterales</taxon>
        <taxon>Enterobacteriaceae</taxon>
        <taxon>Escherichia</taxon>
    </lineage>
</organism>
<dbReference type="EC" id="6.1.1.6"/>
<dbReference type="EMBL" id="X16542">
    <property type="protein sequence ID" value="CAA34542.1"/>
    <property type="molecule type" value="Genomic_DNA"/>
</dbReference>
<dbReference type="EMBL" id="M30630">
    <property type="protein sequence ID" value="AAA24096.1"/>
    <property type="molecule type" value="Genomic_DNA"/>
</dbReference>
<dbReference type="EMBL" id="U14003">
    <property type="protein sequence ID" value="AAA97029.1"/>
    <property type="molecule type" value="Genomic_DNA"/>
</dbReference>
<dbReference type="EMBL" id="U00096">
    <property type="protein sequence ID" value="AAC77090.1"/>
    <property type="molecule type" value="Genomic_DNA"/>
</dbReference>
<dbReference type="EMBL" id="AP009048">
    <property type="protein sequence ID" value="BAE78132.1"/>
    <property type="molecule type" value="Genomic_DNA"/>
</dbReference>
<dbReference type="PIR" id="S56358">
    <property type="entry name" value="SYECKU"/>
</dbReference>
<dbReference type="RefSeq" id="NP_418553.1">
    <property type="nucleotide sequence ID" value="NC_000913.3"/>
</dbReference>
<dbReference type="PDB" id="1E1O">
    <property type="method" value="X-ray"/>
    <property type="resolution" value="2.12 A"/>
    <property type="chains" value="A=2-505"/>
</dbReference>
<dbReference type="PDB" id="1E1T">
    <property type="method" value="X-ray"/>
    <property type="resolution" value="2.40 A"/>
    <property type="chains" value="A=2-505"/>
</dbReference>
<dbReference type="PDB" id="1E22">
    <property type="method" value="X-ray"/>
    <property type="resolution" value="2.43 A"/>
    <property type="chains" value="A=2-505"/>
</dbReference>
<dbReference type="PDB" id="1E24">
    <property type="method" value="X-ray"/>
    <property type="resolution" value="2.35 A"/>
    <property type="chains" value="A=2-505"/>
</dbReference>
<dbReference type="PDB" id="1LYL">
    <property type="method" value="X-ray"/>
    <property type="resolution" value="2.80 A"/>
    <property type="chains" value="A/B/C=2-505"/>
</dbReference>
<dbReference type="PDB" id="5YZX">
    <property type="method" value="X-ray"/>
    <property type="resolution" value="3.20 A"/>
    <property type="chains" value="A/B/C=1-505"/>
</dbReference>
<dbReference type="PDBsum" id="1E1O"/>
<dbReference type="PDBsum" id="1E1T"/>
<dbReference type="PDBsum" id="1E22"/>
<dbReference type="PDBsum" id="1E24"/>
<dbReference type="PDBsum" id="1LYL"/>
<dbReference type="PDBsum" id="5YZX"/>
<dbReference type="SMR" id="P0A8N5"/>
<dbReference type="BioGRID" id="4262688">
    <property type="interactions" value="23"/>
</dbReference>
<dbReference type="DIP" id="DIP-36212N"/>
<dbReference type="FunCoup" id="P0A8N5">
    <property type="interactions" value="1007"/>
</dbReference>
<dbReference type="IntAct" id="P0A8N5">
    <property type="interactions" value="52"/>
</dbReference>
<dbReference type="STRING" id="511145.b4129"/>
<dbReference type="iPTMnet" id="P0A8N5"/>
<dbReference type="jPOST" id="P0A8N5"/>
<dbReference type="PaxDb" id="511145-b4129"/>
<dbReference type="EnsemblBacteria" id="AAC77090">
    <property type="protein sequence ID" value="AAC77090"/>
    <property type="gene ID" value="b4129"/>
</dbReference>
<dbReference type="GeneID" id="948645"/>
<dbReference type="KEGG" id="ecj:JW4090"/>
<dbReference type="KEGG" id="eco:b4129"/>
<dbReference type="KEGG" id="ecoc:C3026_22320"/>
<dbReference type="PATRIC" id="fig|1411691.4.peg.2570"/>
<dbReference type="EchoBASE" id="EB0548"/>
<dbReference type="eggNOG" id="COG1190">
    <property type="taxonomic scope" value="Bacteria"/>
</dbReference>
<dbReference type="HOGENOM" id="CLU_008255_6_0_6"/>
<dbReference type="InParanoid" id="P0A8N5"/>
<dbReference type="OMA" id="WESTHHA"/>
<dbReference type="OrthoDB" id="9801152at2"/>
<dbReference type="PhylomeDB" id="P0A8N5"/>
<dbReference type="BioCyc" id="EcoCyc:LYSU-MONOMER"/>
<dbReference type="BioCyc" id="MetaCyc:LYSU-MONOMER"/>
<dbReference type="BRENDA" id="6.1.1.6">
    <property type="organism ID" value="2026"/>
</dbReference>
<dbReference type="EvolutionaryTrace" id="P0A8N5"/>
<dbReference type="PRO" id="PR:P0A8N5"/>
<dbReference type="Proteomes" id="UP000000625">
    <property type="component" value="Chromosome"/>
</dbReference>
<dbReference type="GO" id="GO:0005737">
    <property type="term" value="C:cytoplasm"/>
    <property type="evidence" value="ECO:0000318"/>
    <property type="project" value="GO_Central"/>
</dbReference>
<dbReference type="GO" id="GO:0005829">
    <property type="term" value="C:cytosol"/>
    <property type="evidence" value="ECO:0000314"/>
    <property type="project" value="EcoCyc"/>
</dbReference>
<dbReference type="GO" id="GO:0016020">
    <property type="term" value="C:membrane"/>
    <property type="evidence" value="ECO:0007005"/>
    <property type="project" value="UniProtKB"/>
</dbReference>
<dbReference type="GO" id="GO:0005524">
    <property type="term" value="F:ATP binding"/>
    <property type="evidence" value="ECO:0000314"/>
    <property type="project" value="EcoliWiki"/>
</dbReference>
<dbReference type="GO" id="GO:0016874">
    <property type="term" value="F:ligase activity"/>
    <property type="evidence" value="ECO:0000314"/>
    <property type="project" value="EcoliWiki"/>
</dbReference>
<dbReference type="GO" id="GO:0004824">
    <property type="term" value="F:lysine-tRNA ligase activity"/>
    <property type="evidence" value="ECO:0000314"/>
    <property type="project" value="EcoCyc"/>
</dbReference>
<dbReference type="GO" id="GO:0000287">
    <property type="term" value="F:magnesium ion binding"/>
    <property type="evidence" value="ECO:0000314"/>
    <property type="project" value="EcoliWiki"/>
</dbReference>
<dbReference type="GO" id="GO:0042803">
    <property type="term" value="F:protein homodimerization activity"/>
    <property type="evidence" value="ECO:0000314"/>
    <property type="project" value="EcoCyc"/>
</dbReference>
<dbReference type="GO" id="GO:0000049">
    <property type="term" value="F:tRNA binding"/>
    <property type="evidence" value="ECO:0000318"/>
    <property type="project" value="GO_Central"/>
</dbReference>
<dbReference type="GO" id="GO:0034605">
    <property type="term" value="P:cellular response to heat"/>
    <property type="evidence" value="ECO:0000315"/>
    <property type="project" value="EcoCyc"/>
</dbReference>
<dbReference type="GO" id="GO:0006430">
    <property type="term" value="P:lysyl-tRNA aminoacylation"/>
    <property type="evidence" value="ECO:0000314"/>
    <property type="project" value="EcoCyc"/>
</dbReference>
<dbReference type="GO" id="GO:0036260">
    <property type="term" value="P:RNA capping"/>
    <property type="evidence" value="ECO:0000314"/>
    <property type="project" value="EcoCyc"/>
</dbReference>
<dbReference type="GO" id="GO:0006418">
    <property type="term" value="P:tRNA aminoacylation for protein translation"/>
    <property type="evidence" value="ECO:0000316"/>
    <property type="project" value="EcoliWiki"/>
</dbReference>
<dbReference type="CDD" id="cd00775">
    <property type="entry name" value="LysRS_core"/>
    <property type="match status" value="1"/>
</dbReference>
<dbReference type="CDD" id="cd04322">
    <property type="entry name" value="LysRS_N"/>
    <property type="match status" value="1"/>
</dbReference>
<dbReference type="FunFam" id="2.40.50.140:FF:000024">
    <property type="entry name" value="Lysine--tRNA ligase"/>
    <property type="match status" value="1"/>
</dbReference>
<dbReference type="FunFam" id="3.30.930.10:FF:000001">
    <property type="entry name" value="Lysine--tRNA ligase"/>
    <property type="match status" value="1"/>
</dbReference>
<dbReference type="Gene3D" id="3.30.930.10">
    <property type="entry name" value="Bira Bifunctional Protein, Domain 2"/>
    <property type="match status" value="1"/>
</dbReference>
<dbReference type="Gene3D" id="2.40.50.140">
    <property type="entry name" value="Nucleic acid-binding proteins"/>
    <property type="match status" value="1"/>
</dbReference>
<dbReference type="HAMAP" id="MF_00252">
    <property type="entry name" value="Lys_tRNA_synth_class2"/>
    <property type="match status" value="1"/>
</dbReference>
<dbReference type="InterPro" id="IPR004364">
    <property type="entry name" value="Aa-tRNA-synt_II"/>
</dbReference>
<dbReference type="InterPro" id="IPR006195">
    <property type="entry name" value="aa-tRNA-synth_II"/>
</dbReference>
<dbReference type="InterPro" id="IPR045864">
    <property type="entry name" value="aa-tRNA-synth_II/BPL/LPL"/>
</dbReference>
<dbReference type="InterPro" id="IPR002313">
    <property type="entry name" value="Lys-tRNA-ligase_II"/>
</dbReference>
<dbReference type="InterPro" id="IPR034762">
    <property type="entry name" value="Lys-tRNA-ligase_II_bac/euk"/>
</dbReference>
<dbReference type="InterPro" id="IPR044136">
    <property type="entry name" value="Lys-tRNA-ligase_II_N"/>
</dbReference>
<dbReference type="InterPro" id="IPR018149">
    <property type="entry name" value="Lys-tRNA-synth_II_C"/>
</dbReference>
<dbReference type="InterPro" id="IPR012340">
    <property type="entry name" value="NA-bd_OB-fold"/>
</dbReference>
<dbReference type="InterPro" id="IPR004365">
    <property type="entry name" value="NA-bd_OB_tRNA"/>
</dbReference>
<dbReference type="NCBIfam" id="TIGR00499">
    <property type="entry name" value="lysS_bact"/>
    <property type="match status" value="1"/>
</dbReference>
<dbReference type="NCBIfam" id="NF001756">
    <property type="entry name" value="PRK00484.1"/>
    <property type="match status" value="1"/>
</dbReference>
<dbReference type="NCBIfam" id="NF009101">
    <property type="entry name" value="PRK12445.1"/>
    <property type="match status" value="1"/>
</dbReference>
<dbReference type="PANTHER" id="PTHR42918:SF15">
    <property type="entry name" value="LYSINE--TRNA LIGASE, CHLOROPLASTIC_MITOCHONDRIAL"/>
    <property type="match status" value="1"/>
</dbReference>
<dbReference type="PANTHER" id="PTHR42918">
    <property type="entry name" value="LYSYL-TRNA SYNTHETASE"/>
    <property type="match status" value="1"/>
</dbReference>
<dbReference type="Pfam" id="PF00152">
    <property type="entry name" value="tRNA-synt_2"/>
    <property type="match status" value="1"/>
</dbReference>
<dbReference type="Pfam" id="PF01336">
    <property type="entry name" value="tRNA_anti-codon"/>
    <property type="match status" value="1"/>
</dbReference>
<dbReference type="PIRSF" id="PIRSF039101">
    <property type="entry name" value="LysRS2"/>
    <property type="match status" value="1"/>
</dbReference>
<dbReference type="PRINTS" id="PR00982">
    <property type="entry name" value="TRNASYNTHLYS"/>
</dbReference>
<dbReference type="SUPFAM" id="SSF55681">
    <property type="entry name" value="Class II aaRS and biotin synthetases"/>
    <property type="match status" value="1"/>
</dbReference>
<dbReference type="SUPFAM" id="SSF50249">
    <property type="entry name" value="Nucleic acid-binding proteins"/>
    <property type="match status" value="1"/>
</dbReference>
<dbReference type="PROSITE" id="PS50862">
    <property type="entry name" value="AA_TRNA_LIGASE_II"/>
    <property type="match status" value="1"/>
</dbReference>
<protein>
    <recommendedName>
        <fullName>Lysine--tRNA ligase, heat inducible</fullName>
        <ecNumber>6.1.1.6</ecNumber>
    </recommendedName>
    <alternativeName>
        <fullName>Lysyl-tRNA synthetase</fullName>
        <shortName>LysRS</shortName>
    </alternativeName>
</protein>
<evidence type="ECO:0000269" key="1">
    <source>
    </source>
</evidence>
<evidence type="ECO:0000269" key="2">
    <source>
    </source>
</evidence>
<evidence type="ECO:0000305" key="3"/>
<evidence type="ECO:0007829" key="4">
    <source>
        <dbReference type="PDB" id="1E1O"/>
    </source>
</evidence>
<comment type="function">
    <text>Can also synthesize a number of adenyl dinucleotides (in particular AppppA). These dinucleotides have been proposed to act as modulators of the heat-shock response and stress response.</text>
</comment>
<comment type="catalytic activity">
    <reaction>
        <text>tRNA(Lys) + L-lysine + ATP = L-lysyl-tRNA(Lys) + AMP + diphosphate</text>
        <dbReference type="Rhea" id="RHEA:20792"/>
        <dbReference type="Rhea" id="RHEA-COMP:9696"/>
        <dbReference type="Rhea" id="RHEA-COMP:9697"/>
        <dbReference type="ChEBI" id="CHEBI:30616"/>
        <dbReference type="ChEBI" id="CHEBI:32551"/>
        <dbReference type="ChEBI" id="CHEBI:33019"/>
        <dbReference type="ChEBI" id="CHEBI:78442"/>
        <dbReference type="ChEBI" id="CHEBI:78529"/>
        <dbReference type="ChEBI" id="CHEBI:456215"/>
        <dbReference type="EC" id="6.1.1.6"/>
    </reaction>
</comment>
<comment type="cofactor">
    <cofactor>
        <name>Mg(2+)</name>
        <dbReference type="ChEBI" id="CHEBI:18420"/>
    </cofactor>
    <text>Binds 3 Mg(2+) ions per subunit. The third one is coordinated by ATP.</text>
</comment>
<comment type="subunit">
    <text>Homodimer.</text>
</comment>
<comment type="subcellular location">
    <subcellularLocation>
        <location>Cytoplasm</location>
    </subcellularLocation>
</comment>
<comment type="miscellaneous">
    <text>There are two lysyl-tRNA ligases in E.coli: lysS is expressed constitutively, while lysU is heat inducible.</text>
</comment>
<comment type="similarity">
    <text evidence="3">Belongs to the class-II aminoacyl-tRNA synthetase family.</text>
</comment>
<sequence>MSEQETRGANEAIDFNDELRNRREKLAALRQQGVAFPNDFRRDHTSDQLHEEFDAKDNQELESLNIEVSVAGRMMTRRIMGKASFVTLQDVGGRIQLYVARDSLPEGVYNDQFKKWDLGDIIGARGTLFKTQTGELSIHCTELRLLTKALRPLPDKFHGLQDQEVRYRQRYLDLIANDKSRQTFVVRSKILAAIRQFMVARGFMEVETPMMQVIPGGASARPFITHHNALDLDMYLRIAPELYLKRLVVGGFERVFEINRNFRNEGISVRHNPEFTMMELYMAYADYHDLIELTESLFRTLAQEVLGTTKVTYGEHVFDFGKPFEKLTMREAIKKYRPETDMADLDNFDAAKALAESIGITVEKSWGLGRIVTEIFDEVAEAHLIQPTFITEYPAEVSPLARRNDVNPEITDRFEFFIGGREIGNGFSELNDAEDQAERFQEQVNAKAAGDDEAMFYDEDYVTALEYGLPPTAGLGIGIDRMIMLFTNSHTIRDVILFPAMRPQK</sequence>
<name>SYK2_ECOLI</name>
<keyword id="KW-0002">3D-structure</keyword>
<keyword id="KW-0007">Acetylation</keyword>
<keyword id="KW-0030">Aminoacyl-tRNA synthetase</keyword>
<keyword id="KW-0067">ATP-binding</keyword>
<keyword id="KW-0963">Cytoplasm</keyword>
<keyword id="KW-0903">Direct protein sequencing</keyword>
<keyword id="KW-0436">Ligase</keyword>
<keyword id="KW-0460">Magnesium</keyword>
<keyword id="KW-0479">Metal-binding</keyword>
<keyword id="KW-0547">Nucleotide-binding</keyword>
<keyword id="KW-0648">Protein biosynthesis</keyword>
<keyword id="KW-1185">Reference proteome</keyword>
<gene>
    <name type="primary">lysU</name>
    <name type="ordered locus">b4129</name>
    <name type="ordered locus">JW4090</name>
</gene>
<proteinExistence type="evidence at protein level"/>
<feature type="initiator methionine" description="Removed" evidence="2">
    <location>
        <position position="1"/>
    </location>
</feature>
<feature type="chain" id="PRO_0000152627" description="Lysine--tRNA ligase, heat inducible">
    <location>
        <begin position="2"/>
        <end position="505"/>
    </location>
</feature>
<feature type="binding site">
    <location>
        <position position="415"/>
    </location>
    <ligand>
        <name>Mg(2+)</name>
        <dbReference type="ChEBI" id="CHEBI:18420"/>
        <label>1</label>
    </ligand>
</feature>
<feature type="binding site">
    <location>
        <position position="422"/>
    </location>
    <ligand>
        <name>Mg(2+)</name>
        <dbReference type="ChEBI" id="CHEBI:18420"/>
        <label>1</label>
    </ligand>
</feature>
<feature type="binding site">
    <location>
        <position position="422"/>
    </location>
    <ligand>
        <name>Mg(2+)</name>
        <dbReference type="ChEBI" id="CHEBI:18420"/>
        <label>2</label>
    </ligand>
</feature>
<feature type="modified residue" description="N6-acetyllysine" evidence="1">
    <location>
        <position position="114"/>
    </location>
</feature>
<feature type="modified residue" description="N6-acetyllysine" evidence="1">
    <location>
        <position position="156"/>
    </location>
</feature>
<feature type="sequence conflict" description="In Ref. 3; AAA24096." evidence="3" ref="3">
    <location>
        <position position="125"/>
    </location>
</feature>
<feature type="sequence conflict" description="In Ref. 3; AAA24096." evidence="3" ref="3">
    <original>L</original>
    <variation>A</variation>
    <location>
        <position position="236"/>
    </location>
</feature>
<feature type="sequence conflict" description="In Ref. 3; AAA24096." evidence="3" ref="3">
    <original>INRNF</original>
    <variation>HVT</variation>
    <location>
        <begin position="258"/>
        <end position="262"/>
    </location>
</feature>
<feature type="sequence conflict" description="In Ref. 3; AAA24096." evidence="3" ref="3">
    <original>SV</original>
    <variation>R</variation>
    <location>
        <begin position="268"/>
        <end position="269"/>
    </location>
</feature>
<feature type="sequence conflict" description="In Ref. 3; AAA24096." evidence="3" ref="3">
    <original>A</original>
    <variation>R</variation>
    <location>
        <position position="351"/>
    </location>
</feature>
<feature type="sequence conflict" description="In Ref. 3; AAA24096." evidence="3" ref="3">
    <original>I</original>
    <variation>S</variation>
    <location>
        <position position="371"/>
    </location>
</feature>
<feature type="sequence conflict" description="In Ref. 3; AAA24096." evidence="3" ref="3">
    <original>AEAHL</original>
    <variation>VEGHV</variation>
    <location>
        <begin position="380"/>
        <end position="384"/>
    </location>
</feature>
<feature type="sequence conflict" description="In Ref. 3; AAA24096." evidence="3" ref="3">
    <original>T</original>
    <variation>S</variation>
    <location>
        <position position="388"/>
    </location>
</feature>
<feature type="helix" evidence="4">
    <location>
        <begin position="13"/>
        <end position="32"/>
    </location>
</feature>
<feature type="helix" evidence="4">
    <location>
        <begin position="46"/>
        <end position="53"/>
    </location>
</feature>
<feature type="helix" evidence="4">
    <location>
        <begin position="58"/>
        <end position="64"/>
    </location>
</feature>
<feature type="strand" evidence="4">
    <location>
        <begin position="67"/>
        <end position="80"/>
    </location>
</feature>
<feature type="strand" evidence="4">
    <location>
        <begin position="83"/>
        <end position="90"/>
    </location>
</feature>
<feature type="strand" evidence="4">
    <location>
        <begin position="93"/>
        <end position="100"/>
    </location>
</feature>
<feature type="turn" evidence="4">
    <location>
        <begin position="101"/>
        <end position="103"/>
    </location>
</feature>
<feature type="helix" evidence="4">
    <location>
        <begin position="108"/>
        <end position="111"/>
    </location>
</feature>
<feature type="helix" evidence="4">
    <location>
        <begin position="113"/>
        <end position="115"/>
    </location>
</feature>
<feature type="strand" evidence="4">
    <location>
        <begin position="121"/>
        <end position="130"/>
    </location>
</feature>
<feature type="strand" evidence="4">
    <location>
        <begin position="136"/>
        <end position="147"/>
    </location>
</feature>
<feature type="helix" evidence="4">
    <location>
        <begin position="165"/>
        <end position="168"/>
    </location>
</feature>
<feature type="helix" evidence="4">
    <location>
        <begin position="170"/>
        <end position="176"/>
    </location>
</feature>
<feature type="helix" evidence="4">
    <location>
        <begin position="178"/>
        <end position="199"/>
    </location>
</feature>
<feature type="turn" evidence="4">
    <location>
        <begin position="200"/>
        <end position="202"/>
    </location>
</feature>
<feature type="strand" evidence="4">
    <location>
        <begin position="210"/>
        <end position="214"/>
    </location>
</feature>
<feature type="strand" evidence="4">
    <location>
        <begin position="224"/>
        <end position="227"/>
    </location>
</feature>
<feature type="turn" evidence="4">
    <location>
        <begin position="228"/>
        <end position="231"/>
    </location>
</feature>
<feature type="strand" evidence="4">
    <location>
        <begin position="232"/>
        <end position="236"/>
    </location>
</feature>
<feature type="helix" evidence="4">
    <location>
        <begin position="241"/>
        <end position="250"/>
    </location>
</feature>
<feature type="strand" evidence="4">
    <location>
        <begin position="254"/>
        <end position="262"/>
    </location>
</feature>
<feature type="strand" evidence="4">
    <location>
        <begin position="273"/>
        <end position="284"/>
    </location>
</feature>
<feature type="helix" evidence="4">
    <location>
        <begin position="287"/>
        <end position="306"/>
    </location>
</feature>
<feature type="strand" evidence="4">
    <location>
        <begin position="307"/>
        <end position="313"/>
    </location>
</feature>
<feature type="strand" evidence="4">
    <location>
        <begin position="316"/>
        <end position="319"/>
    </location>
</feature>
<feature type="strand" evidence="4">
    <location>
        <begin position="325"/>
        <end position="328"/>
    </location>
</feature>
<feature type="helix" evidence="4">
    <location>
        <begin position="329"/>
        <end position="336"/>
    </location>
</feature>
<feature type="helix" evidence="4">
    <location>
        <begin position="342"/>
        <end position="346"/>
    </location>
</feature>
<feature type="helix" evidence="4">
    <location>
        <begin position="348"/>
        <end position="357"/>
    </location>
</feature>
<feature type="helix" evidence="4">
    <location>
        <begin position="368"/>
        <end position="379"/>
    </location>
</feature>
<feature type="helix" evidence="4">
    <location>
        <begin position="381"/>
        <end position="383"/>
    </location>
</feature>
<feature type="strand" evidence="4">
    <location>
        <begin position="388"/>
        <end position="391"/>
    </location>
</feature>
<feature type="helix" evidence="4">
    <location>
        <begin position="395"/>
        <end position="397"/>
    </location>
</feature>
<feature type="strand" evidence="4">
    <location>
        <begin position="410"/>
        <end position="418"/>
    </location>
</feature>
<feature type="strand" evidence="4">
    <location>
        <begin position="421"/>
        <end position="429"/>
    </location>
</feature>
<feature type="helix" evidence="4">
    <location>
        <begin position="433"/>
        <end position="448"/>
    </location>
</feature>
<feature type="helix" evidence="4">
    <location>
        <begin position="459"/>
        <end position="468"/>
    </location>
</feature>
<feature type="strand" evidence="4">
    <location>
        <begin position="471"/>
        <end position="478"/>
    </location>
</feature>
<feature type="helix" evidence="4">
    <location>
        <begin position="479"/>
        <end position="486"/>
    </location>
</feature>
<feature type="helix" evidence="4">
    <location>
        <begin position="492"/>
        <end position="494"/>
    </location>
</feature>
<feature type="strand" evidence="4">
    <location>
        <begin position="496"/>
        <end position="498"/>
    </location>
</feature>